<organism>
    <name type="scientific">Glaesserella parasuis serovar 5 (strain SH0165)</name>
    <name type="common">Haemophilus parasuis</name>
    <dbReference type="NCBI Taxonomy" id="557723"/>
    <lineage>
        <taxon>Bacteria</taxon>
        <taxon>Pseudomonadati</taxon>
        <taxon>Pseudomonadota</taxon>
        <taxon>Gammaproteobacteria</taxon>
        <taxon>Pasteurellales</taxon>
        <taxon>Pasteurellaceae</taxon>
        <taxon>Glaesserella</taxon>
    </lineage>
</organism>
<evidence type="ECO:0000255" key="1">
    <source>
        <dbReference type="HAMAP-Rule" id="MF_00163"/>
    </source>
</evidence>
<sequence>MAVLDVLIYPDENLAKVCQPVETVDAELNTFIDNMFDTMYEHEGIGLAAPQVNVLKRVITIDIEGDKTNQIVLINPEILESSGETGIEEGCLSIPGCRALVPRKEKLTVKALNREGQTFTLEADGLLAICIQHEIDHLNGVLFVDHISQLKRQRIKEKMLKLKKQIERAK</sequence>
<accession>B8F726</accession>
<name>DEF_GLAP5</name>
<keyword id="KW-0378">Hydrolase</keyword>
<keyword id="KW-0408">Iron</keyword>
<keyword id="KW-0479">Metal-binding</keyword>
<keyword id="KW-0648">Protein biosynthesis</keyword>
<keyword id="KW-1185">Reference proteome</keyword>
<dbReference type="EC" id="3.5.1.88" evidence="1"/>
<dbReference type="EMBL" id="CP001321">
    <property type="protein sequence ID" value="ACL33128.1"/>
    <property type="molecule type" value="Genomic_DNA"/>
</dbReference>
<dbReference type="RefSeq" id="WP_005712670.1">
    <property type="nucleotide sequence ID" value="NC_011852.1"/>
</dbReference>
<dbReference type="SMR" id="B8F726"/>
<dbReference type="STRING" id="557723.HAPS_1574"/>
<dbReference type="GeneID" id="66617734"/>
<dbReference type="KEGG" id="hap:HAPS_1574"/>
<dbReference type="HOGENOM" id="CLU_061901_2_1_6"/>
<dbReference type="Proteomes" id="UP000006743">
    <property type="component" value="Chromosome"/>
</dbReference>
<dbReference type="GO" id="GO:0046872">
    <property type="term" value="F:metal ion binding"/>
    <property type="evidence" value="ECO:0007669"/>
    <property type="project" value="UniProtKB-KW"/>
</dbReference>
<dbReference type="GO" id="GO:0042586">
    <property type="term" value="F:peptide deformylase activity"/>
    <property type="evidence" value="ECO:0007669"/>
    <property type="project" value="UniProtKB-UniRule"/>
</dbReference>
<dbReference type="GO" id="GO:0043686">
    <property type="term" value="P:co-translational protein modification"/>
    <property type="evidence" value="ECO:0007669"/>
    <property type="project" value="TreeGrafter"/>
</dbReference>
<dbReference type="GO" id="GO:0006412">
    <property type="term" value="P:translation"/>
    <property type="evidence" value="ECO:0007669"/>
    <property type="project" value="UniProtKB-UniRule"/>
</dbReference>
<dbReference type="CDD" id="cd00487">
    <property type="entry name" value="Pep_deformylase"/>
    <property type="match status" value="1"/>
</dbReference>
<dbReference type="FunFam" id="3.90.45.10:FF:000001">
    <property type="entry name" value="Peptide deformylase"/>
    <property type="match status" value="1"/>
</dbReference>
<dbReference type="Gene3D" id="3.90.45.10">
    <property type="entry name" value="Peptide deformylase"/>
    <property type="match status" value="1"/>
</dbReference>
<dbReference type="HAMAP" id="MF_00163">
    <property type="entry name" value="Pep_deformylase"/>
    <property type="match status" value="1"/>
</dbReference>
<dbReference type="InterPro" id="IPR023635">
    <property type="entry name" value="Peptide_deformylase"/>
</dbReference>
<dbReference type="InterPro" id="IPR036821">
    <property type="entry name" value="Peptide_deformylase_sf"/>
</dbReference>
<dbReference type="NCBIfam" id="TIGR00079">
    <property type="entry name" value="pept_deformyl"/>
    <property type="match status" value="1"/>
</dbReference>
<dbReference type="NCBIfam" id="NF001159">
    <property type="entry name" value="PRK00150.1-3"/>
    <property type="match status" value="1"/>
</dbReference>
<dbReference type="PANTHER" id="PTHR10458">
    <property type="entry name" value="PEPTIDE DEFORMYLASE"/>
    <property type="match status" value="1"/>
</dbReference>
<dbReference type="PANTHER" id="PTHR10458:SF21">
    <property type="entry name" value="PEPTIDE DEFORMYLASE"/>
    <property type="match status" value="1"/>
</dbReference>
<dbReference type="Pfam" id="PF01327">
    <property type="entry name" value="Pep_deformylase"/>
    <property type="match status" value="1"/>
</dbReference>
<dbReference type="PIRSF" id="PIRSF004749">
    <property type="entry name" value="Pep_def"/>
    <property type="match status" value="1"/>
</dbReference>
<dbReference type="PRINTS" id="PR01576">
    <property type="entry name" value="PDEFORMYLASE"/>
</dbReference>
<dbReference type="SUPFAM" id="SSF56420">
    <property type="entry name" value="Peptide deformylase"/>
    <property type="match status" value="1"/>
</dbReference>
<comment type="function">
    <text evidence="1">Removes the formyl group from the N-terminal Met of newly synthesized proteins. Requires at least a dipeptide for an efficient rate of reaction. N-terminal L-methionine is a prerequisite for activity but the enzyme has broad specificity at other positions.</text>
</comment>
<comment type="catalytic activity">
    <reaction evidence="1">
        <text>N-terminal N-formyl-L-methionyl-[peptide] + H2O = N-terminal L-methionyl-[peptide] + formate</text>
        <dbReference type="Rhea" id="RHEA:24420"/>
        <dbReference type="Rhea" id="RHEA-COMP:10639"/>
        <dbReference type="Rhea" id="RHEA-COMP:10640"/>
        <dbReference type="ChEBI" id="CHEBI:15377"/>
        <dbReference type="ChEBI" id="CHEBI:15740"/>
        <dbReference type="ChEBI" id="CHEBI:49298"/>
        <dbReference type="ChEBI" id="CHEBI:64731"/>
        <dbReference type="EC" id="3.5.1.88"/>
    </reaction>
</comment>
<comment type="cofactor">
    <cofactor evidence="1">
        <name>Fe(2+)</name>
        <dbReference type="ChEBI" id="CHEBI:29033"/>
    </cofactor>
    <text evidence="1">Binds 1 Fe(2+) ion.</text>
</comment>
<comment type="similarity">
    <text evidence="1">Belongs to the polypeptide deformylase family.</text>
</comment>
<gene>
    <name evidence="1" type="primary">def</name>
    <name type="ordered locus">HAPS_1574</name>
</gene>
<feature type="chain" id="PRO_1000200735" description="Peptide deformylase">
    <location>
        <begin position="1"/>
        <end position="170"/>
    </location>
</feature>
<feature type="active site" evidence="1">
    <location>
        <position position="134"/>
    </location>
</feature>
<feature type="binding site" evidence="1">
    <location>
        <position position="91"/>
    </location>
    <ligand>
        <name>Fe cation</name>
        <dbReference type="ChEBI" id="CHEBI:24875"/>
    </ligand>
</feature>
<feature type="binding site" evidence="1">
    <location>
        <position position="133"/>
    </location>
    <ligand>
        <name>Fe cation</name>
        <dbReference type="ChEBI" id="CHEBI:24875"/>
    </ligand>
</feature>
<feature type="binding site" evidence="1">
    <location>
        <position position="137"/>
    </location>
    <ligand>
        <name>Fe cation</name>
        <dbReference type="ChEBI" id="CHEBI:24875"/>
    </ligand>
</feature>
<reference key="1">
    <citation type="journal article" date="2009" name="J. Bacteriol.">
        <title>Complete genome sequence of Haemophilus parasuis SH0165.</title>
        <authorList>
            <person name="Yue M."/>
            <person name="Yang F."/>
            <person name="Yang J."/>
            <person name="Bei W."/>
            <person name="Cai X."/>
            <person name="Chen L."/>
            <person name="Dong J."/>
            <person name="Zhou R."/>
            <person name="Jin M."/>
            <person name="Jin Q."/>
            <person name="Chen H."/>
        </authorList>
    </citation>
    <scope>NUCLEOTIDE SEQUENCE [LARGE SCALE GENOMIC DNA]</scope>
    <source>
        <strain>SH0165</strain>
    </source>
</reference>
<proteinExistence type="inferred from homology"/>
<protein>
    <recommendedName>
        <fullName evidence="1">Peptide deformylase</fullName>
        <shortName evidence="1">PDF</shortName>
        <ecNumber evidence="1">3.5.1.88</ecNumber>
    </recommendedName>
    <alternativeName>
        <fullName evidence="1">Polypeptide deformylase</fullName>
    </alternativeName>
</protein>